<sequence length="210" mass="24016">MSTLHKVKAYFGMAPMEDYDDEYYDDRSPTHGYGRSRFEEGYGRYEGRDYSDLRGDPTGYLPLGYRGGYGDEHRFRPREFDRPDLSRPRLGSWLRNSTRGALAMDPRRMAMLFDEGSPLSKITTLRPKDYSEARTIGERFRDGTPVIIDLVSMDNADAKRLVDFAAGLAFALRGSFDKVATKVFLLSPADVDVSPEERRRIAETGFYAYQ</sequence>
<gene>
    <name evidence="1" type="primary">sepF</name>
    <name type="ordered locus">MLBr00920</name>
</gene>
<accession>B8ZQQ6</accession>
<proteinExistence type="inferred from homology"/>
<protein>
    <recommendedName>
        <fullName evidence="1">Cell division protein SepF</fullName>
    </recommendedName>
</protein>
<evidence type="ECO:0000255" key="1">
    <source>
        <dbReference type="HAMAP-Rule" id="MF_01197"/>
    </source>
</evidence>
<keyword id="KW-0131">Cell cycle</keyword>
<keyword id="KW-0132">Cell division</keyword>
<keyword id="KW-0963">Cytoplasm</keyword>
<keyword id="KW-0717">Septation</keyword>
<dbReference type="EMBL" id="FM211192">
    <property type="protein sequence ID" value="CAR71015.1"/>
    <property type="molecule type" value="Genomic_DNA"/>
</dbReference>
<dbReference type="SMR" id="B8ZQQ6"/>
<dbReference type="KEGG" id="mlb:MLBr00920"/>
<dbReference type="HOGENOM" id="CLU_078499_0_0_11"/>
<dbReference type="Proteomes" id="UP000006900">
    <property type="component" value="Chromosome"/>
</dbReference>
<dbReference type="GO" id="GO:0005737">
    <property type="term" value="C:cytoplasm"/>
    <property type="evidence" value="ECO:0007669"/>
    <property type="project" value="UniProtKB-SubCell"/>
</dbReference>
<dbReference type="GO" id="GO:0000917">
    <property type="term" value="P:division septum assembly"/>
    <property type="evidence" value="ECO:0007669"/>
    <property type="project" value="UniProtKB-KW"/>
</dbReference>
<dbReference type="GO" id="GO:0043093">
    <property type="term" value="P:FtsZ-dependent cytokinesis"/>
    <property type="evidence" value="ECO:0007669"/>
    <property type="project" value="UniProtKB-UniRule"/>
</dbReference>
<dbReference type="FunFam" id="3.30.110.150:FF:000001">
    <property type="entry name" value="Cell division protein SepF"/>
    <property type="match status" value="1"/>
</dbReference>
<dbReference type="Gene3D" id="3.30.110.150">
    <property type="entry name" value="SepF-like protein"/>
    <property type="match status" value="1"/>
</dbReference>
<dbReference type="HAMAP" id="MF_01197">
    <property type="entry name" value="SepF"/>
    <property type="match status" value="1"/>
</dbReference>
<dbReference type="InterPro" id="IPR023052">
    <property type="entry name" value="Cell_div_SepF"/>
</dbReference>
<dbReference type="InterPro" id="IPR007561">
    <property type="entry name" value="Cell_div_SepF/SepF-rel"/>
</dbReference>
<dbReference type="InterPro" id="IPR038594">
    <property type="entry name" value="SepF-like_sf"/>
</dbReference>
<dbReference type="PANTHER" id="PTHR35798">
    <property type="entry name" value="CELL DIVISION PROTEIN SEPF"/>
    <property type="match status" value="1"/>
</dbReference>
<dbReference type="PANTHER" id="PTHR35798:SF1">
    <property type="entry name" value="CELL DIVISION PROTEIN SEPF"/>
    <property type="match status" value="1"/>
</dbReference>
<dbReference type="Pfam" id="PF04472">
    <property type="entry name" value="SepF"/>
    <property type="match status" value="1"/>
</dbReference>
<organism>
    <name type="scientific">Mycobacterium leprae (strain Br4923)</name>
    <dbReference type="NCBI Taxonomy" id="561304"/>
    <lineage>
        <taxon>Bacteria</taxon>
        <taxon>Bacillati</taxon>
        <taxon>Actinomycetota</taxon>
        <taxon>Actinomycetes</taxon>
        <taxon>Mycobacteriales</taxon>
        <taxon>Mycobacteriaceae</taxon>
        <taxon>Mycobacterium</taxon>
    </lineage>
</organism>
<name>SEPF_MYCLB</name>
<comment type="function">
    <text evidence="1">Cell division protein that is part of the divisome complex and is recruited early to the Z-ring. Probably stimulates Z-ring formation, perhaps through the cross-linking of FtsZ protofilaments. Its function overlaps with FtsA.</text>
</comment>
<comment type="subunit">
    <text evidence="1">Homodimer. Interacts with FtsZ.</text>
</comment>
<comment type="subcellular location">
    <subcellularLocation>
        <location evidence="1">Cytoplasm</location>
    </subcellularLocation>
    <text evidence="1">Localizes to the division site, in a FtsZ-dependent manner.</text>
</comment>
<comment type="similarity">
    <text evidence="1">Belongs to the SepF family.</text>
</comment>
<feature type="chain" id="PRO_1000164538" description="Cell division protein SepF">
    <location>
        <begin position="1"/>
        <end position="210"/>
    </location>
</feature>
<reference key="1">
    <citation type="journal article" date="2009" name="Nat. Genet.">
        <title>Comparative genomic and phylogeographic analysis of Mycobacterium leprae.</title>
        <authorList>
            <person name="Monot M."/>
            <person name="Honore N."/>
            <person name="Garnier T."/>
            <person name="Zidane N."/>
            <person name="Sherafi D."/>
            <person name="Paniz-Mondolfi A."/>
            <person name="Matsuoka M."/>
            <person name="Taylor G.M."/>
            <person name="Donoghue H.D."/>
            <person name="Bouwman A."/>
            <person name="Mays S."/>
            <person name="Watson C."/>
            <person name="Lockwood D."/>
            <person name="Khamispour A."/>
            <person name="Dowlati Y."/>
            <person name="Jianping S."/>
            <person name="Rea T.H."/>
            <person name="Vera-Cabrera L."/>
            <person name="Stefani M.M."/>
            <person name="Banu S."/>
            <person name="Macdonald M."/>
            <person name="Sapkota B.R."/>
            <person name="Spencer J.S."/>
            <person name="Thomas J."/>
            <person name="Harshman K."/>
            <person name="Singh P."/>
            <person name="Busso P."/>
            <person name="Gattiker A."/>
            <person name="Rougemont J."/>
            <person name="Brennan P.J."/>
            <person name="Cole S.T."/>
        </authorList>
    </citation>
    <scope>NUCLEOTIDE SEQUENCE [LARGE SCALE GENOMIC DNA]</scope>
    <source>
        <strain>Br4923</strain>
    </source>
</reference>